<protein>
    <recommendedName>
        <fullName>Uncharacterized epimerase/dehydratase SACOL0599</fullName>
    </recommendedName>
</protein>
<feature type="chain" id="PRO_0000270845" description="Uncharacterized epimerase/dehydratase SACOL0599">
    <location>
        <begin position="1"/>
        <end position="321"/>
    </location>
</feature>
<dbReference type="EMBL" id="CP000046">
    <property type="protein sequence ID" value="AAW37709.1"/>
    <property type="molecule type" value="Genomic_DNA"/>
</dbReference>
<dbReference type="RefSeq" id="WP_000723301.1">
    <property type="nucleotide sequence ID" value="NZ_JBGOFO010000009.1"/>
</dbReference>
<dbReference type="SMR" id="Q5HIC2"/>
<dbReference type="KEGG" id="sac:SACOL0599"/>
<dbReference type="HOGENOM" id="CLU_007383_19_1_9"/>
<dbReference type="Proteomes" id="UP000000530">
    <property type="component" value="Chromosome"/>
</dbReference>
<dbReference type="GO" id="GO:0008743">
    <property type="term" value="F:L-threonine 3-dehydrogenase activity"/>
    <property type="evidence" value="ECO:0007669"/>
    <property type="project" value="TreeGrafter"/>
</dbReference>
<dbReference type="GO" id="GO:0006567">
    <property type="term" value="P:threonine catabolic process"/>
    <property type="evidence" value="ECO:0007669"/>
    <property type="project" value="TreeGrafter"/>
</dbReference>
<dbReference type="FunFam" id="3.40.50.720:FF:000077">
    <property type="entry name" value="L-threonine 3-dehydrogenase, mitochondrial"/>
    <property type="match status" value="1"/>
</dbReference>
<dbReference type="Gene3D" id="3.40.50.720">
    <property type="entry name" value="NAD(P)-binding Rossmann-like Domain"/>
    <property type="match status" value="1"/>
</dbReference>
<dbReference type="InterPro" id="IPR001509">
    <property type="entry name" value="Epimerase_deHydtase"/>
</dbReference>
<dbReference type="InterPro" id="IPR036291">
    <property type="entry name" value="NAD(P)-bd_dom_sf"/>
</dbReference>
<dbReference type="InterPro" id="IPR051225">
    <property type="entry name" value="NAD(P)_epim/dehydratase"/>
</dbReference>
<dbReference type="PANTHER" id="PTHR42687">
    <property type="entry name" value="L-THREONINE 3-DEHYDROGENASE"/>
    <property type="match status" value="1"/>
</dbReference>
<dbReference type="PANTHER" id="PTHR42687:SF1">
    <property type="entry name" value="L-THREONINE 3-DEHYDROGENASE, MITOCHONDRIAL"/>
    <property type="match status" value="1"/>
</dbReference>
<dbReference type="Pfam" id="PF01370">
    <property type="entry name" value="Epimerase"/>
    <property type="match status" value="1"/>
</dbReference>
<dbReference type="SUPFAM" id="SSF51735">
    <property type="entry name" value="NAD(P)-binding Rossmann-fold domains"/>
    <property type="match status" value="1"/>
</dbReference>
<proteinExistence type="inferred from homology"/>
<sequence length="321" mass="36053">MKKIMITGALGQIGTELVVKCREIYGTDNVLATDIREPEADSPVQNGPFEILDVTDRDRMFELVRDFEADSLMHMAALLSATAEKNPILAWDLNMGGLMNALEAARTYNLHFFTPSSIGAFGDSTPKVNTPQVTIQQPTTMYGVNKVAGELLCQYYFKRFGVDTRSVRFPGLISHVKEPGGGTTDYAVEIYFKAVREGHYTSFIDKGTYMDMMYMDDAIEAIIKLMEADDAKLETRNGYNLSAMSFDPEMVKEAIQEYYPNFTLDYDVDPIRQGIANSWPDSIDTSCSRGEWGFDPKYDLASMTKLMLEAIEQKDTVKNNN</sequence>
<name>Y599_STAAC</name>
<accession>Q5HIC2</accession>
<gene>
    <name type="ordered locus">SACOL0599</name>
</gene>
<reference key="1">
    <citation type="journal article" date="2005" name="J. Bacteriol.">
        <title>Insights on evolution of virulence and resistance from the complete genome analysis of an early methicillin-resistant Staphylococcus aureus strain and a biofilm-producing methicillin-resistant Staphylococcus epidermidis strain.</title>
        <authorList>
            <person name="Gill S.R."/>
            <person name="Fouts D.E."/>
            <person name="Archer G.L."/>
            <person name="Mongodin E.F."/>
            <person name="DeBoy R.T."/>
            <person name="Ravel J."/>
            <person name="Paulsen I.T."/>
            <person name="Kolonay J.F."/>
            <person name="Brinkac L.M."/>
            <person name="Beanan M.J."/>
            <person name="Dodson R.J."/>
            <person name="Daugherty S.C."/>
            <person name="Madupu R."/>
            <person name="Angiuoli S.V."/>
            <person name="Durkin A.S."/>
            <person name="Haft D.H."/>
            <person name="Vamathevan J.J."/>
            <person name="Khouri H."/>
            <person name="Utterback T.R."/>
            <person name="Lee C."/>
            <person name="Dimitrov G."/>
            <person name="Jiang L."/>
            <person name="Qin H."/>
            <person name="Weidman J."/>
            <person name="Tran K."/>
            <person name="Kang K.H."/>
            <person name="Hance I.R."/>
            <person name="Nelson K.E."/>
            <person name="Fraser C.M."/>
        </authorList>
    </citation>
    <scope>NUCLEOTIDE SEQUENCE [LARGE SCALE GENOMIC DNA]</scope>
    <source>
        <strain>COL</strain>
    </source>
</reference>
<comment type="similarity">
    <text evidence="1">Belongs to the NAD(P)-dependent epimerase/dehydratase family.</text>
</comment>
<evidence type="ECO:0000305" key="1"/>
<organism>
    <name type="scientific">Staphylococcus aureus (strain COL)</name>
    <dbReference type="NCBI Taxonomy" id="93062"/>
    <lineage>
        <taxon>Bacteria</taxon>
        <taxon>Bacillati</taxon>
        <taxon>Bacillota</taxon>
        <taxon>Bacilli</taxon>
        <taxon>Bacillales</taxon>
        <taxon>Staphylococcaceae</taxon>
        <taxon>Staphylococcus</taxon>
    </lineage>
</organism>